<gene>
    <name evidence="5" type="primary">PBL5</name>
    <name type="ordered locus">At1g07870</name>
    <name type="ORF">F24B9.4</name>
</gene>
<reference key="1">
    <citation type="journal article" date="2000" name="Nature">
        <title>Sequence and analysis of chromosome 1 of the plant Arabidopsis thaliana.</title>
        <authorList>
            <person name="Theologis A."/>
            <person name="Ecker J.R."/>
            <person name="Palm C.J."/>
            <person name="Federspiel N.A."/>
            <person name="Kaul S."/>
            <person name="White O."/>
            <person name="Alonso J."/>
            <person name="Altafi H."/>
            <person name="Araujo R."/>
            <person name="Bowman C.L."/>
            <person name="Brooks S.Y."/>
            <person name="Buehler E."/>
            <person name="Chan A."/>
            <person name="Chao Q."/>
            <person name="Chen H."/>
            <person name="Cheuk R.F."/>
            <person name="Chin C.W."/>
            <person name="Chung M.K."/>
            <person name="Conn L."/>
            <person name="Conway A.B."/>
            <person name="Conway A.R."/>
            <person name="Creasy T.H."/>
            <person name="Dewar K."/>
            <person name="Dunn P."/>
            <person name="Etgu P."/>
            <person name="Feldblyum T.V."/>
            <person name="Feng J.-D."/>
            <person name="Fong B."/>
            <person name="Fujii C.Y."/>
            <person name="Gill J.E."/>
            <person name="Goldsmith A.D."/>
            <person name="Haas B."/>
            <person name="Hansen N.F."/>
            <person name="Hughes B."/>
            <person name="Huizar L."/>
            <person name="Hunter J.L."/>
            <person name="Jenkins J."/>
            <person name="Johnson-Hopson C."/>
            <person name="Khan S."/>
            <person name="Khaykin E."/>
            <person name="Kim C.J."/>
            <person name="Koo H.L."/>
            <person name="Kremenetskaia I."/>
            <person name="Kurtz D.B."/>
            <person name="Kwan A."/>
            <person name="Lam B."/>
            <person name="Langin-Hooper S."/>
            <person name="Lee A."/>
            <person name="Lee J.M."/>
            <person name="Lenz C.A."/>
            <person name="Li J.H."/>
            <person name="Li Y.-P."/>
            <person name="Lin X."/>
            <person name="Liu S.X."/>
            <person name="Liu Z.A."/>
            <person name="Luros J.S."/>
            <person name="Maiti R."/>
            <person name="Marziali A."/>
            <person name="Militscher J."/>
            <person name="Miranda M."/>
            <person name="Nguyen M."/>
            <person name="Nierman W.C."/>
            <person name="Osborne B.I."/>
            <person name="Pai G."/>
            <person name="Peterson J."/>
            <person name="Pham P.K."/>
            <person name="Rizzo M."/>
            <person name="Rooney T."/>
            <person name="Rowley D."/>
            <person name="Sakano H."/>
            <person name="Salzberg S.L."/>
            <person name="Schwartz J.R."/>
            <person name="Shinn P."/>
            <person name="Southwick A.M."/>
            <person name="Sun H."/>
            <person name="Tallon L.J."/>
            <person name="Tambunga G."/>
            <person name="Toriumi M.J."/>
            <person name="Town C.D."/>
            <person name="Utterback T."/>
            <person name="Van Aken S."/>
            <person name="Vaysberg M."/>
            <person name="Vysotskaia V.S."/>
            <person name="Walker M."/>
            <person name="Wu D."/>
            <person name="Yu G."/>
            <person name="Fraser C.M."/>
            <person name="Venter J.C."/>
            <person name="Davis R.W."/>
        </authorList>
    </citation>
    <scope>NUCLEOTIDE SEQUENCE [LARGE SCALE GENOMIC DNA]</scope>
    <source>
        <strain>cv. Columbia</strain>
    </source>
</reference>
<reference key="2">
    <citation type="journal article" date="2017" name="Plant J.">
        <title>Araport11: a complete reannotation of the Arabidopsis thaliana reference genome.</title>
        <authorList>
            <person name="Cheng C.Y."/>
            <person name="Krishnakumar V."/>
            <person name="Chan A.P."/>
            <person name="Thibaud-Nissen F."/>
            <person name="Schobel S."/>
            <person name="Town C.D."/>
        </authorList>
    </citation>
    <scope>GENOME REANNOTATION</scope>
    <source>
        <strain>cv. Columbia</strain>
    </source>
</reference>
<reference key="3">
    <citation type="journal article" date="2003" name="Science">
        <title>Empirical analysis of transcriptional activity in the Arabidopsis genome.</title>
        <authorList>
            <person name="Yamada K."/>
            <person name="Lim J."/>
            <person name="Dale J.M."/>
            <person name="Chen H."/>
            <person name="Shinn P."/>
            <person name="Palm C.J."/>
            <person name="Southwick A.M."/>
            <person name="Wu H.C."/>
            <person name="Kim C.J."/>
            <person name="Nguyen M."/>
            <person name="Pham P.K."/>
            <person name="Cheuk R.F."/>
            <person name="Karlin-Newmann G."/>
            <person name="Liu S.X."/>
            <person name="Lam B."/>
            <person name="Sakano H."/>
            <person name="Wu T."/>
            <person name="Yu G."/>
            <person name="Miranda M."/>
            <person name="Quach H.L."/>
            <person name="Tripp M."/>
            <person name="Chang C.H."/>
            <person name="Lee J.M."/>
            <person name="Toriumi M.J."/>
            <person name="Chan M.M."/>
            <person name="Tang C.C."/>
            <person name="Onodera C.S."/>
            <person name="Deng J.M."/>
            <person name="Akiyama K."/>
            <person name="Ansari Y."/>
            <person name="Arakawa T."/>
            <person name="Banh J."/>
            <person name="Banno F."/>
            <person name="Bowser L."/>
            <person name="Brooks S.Y."/>
            <person name="Carninci P."/>
            <person name="Chao Q."/>
            <person name="Choy N."/>
            <person name="Enju A."/>
            <person name="Goldsmith A.D."/>
            <person name="Gurjal M."/>
            <person name="Hansen N.F."/>
            <person name="Hayashizaki Y."/>
            <person name="Johnson-Hopson C."/>
            <person name="Hsuan V.W."/>
            <person name="Iida K."/>
            <person name="Karnes M."/>
            <person name="Khan S."/>
            <person name="Koesema E."/>
            <person name="Ishida J."/>
            <person name="Jiang P.X."/>
            <person name="Jones T."/>
            <person name="Kawai J."/>
            <person name="Kamiya A."/>
            <person name="Meyers C."/>
            <person name="Nakajima M."/>
            <person name="Narusaka M."/>
            <person name="Seki M."/>
            <person name="Sakurai T."/>
            <person name="Satou M."/>
            <person name="Tamse R."/>
            <person name="Vaysberg M."/>
            <person name="Wallender E.K."/>
            <person name="Wong C."/>
            <person name="Yamamura Y."/>
            <person name="Yuan S."/>
            <person name="Shinozaki K."/>
            <person name="Davis R.W."/>
            <person name="Theologis A."/>
            <person name="Ecker J.R."/>
        </authorList>
    </citation>
    <scope>NUCLEOTIDE SEQUENCE [LARGE SCALE MRNA]</scope>
    <source>
        <strain>cv. Columbia</strain>
    </source>
</reference>
<reference key="4">
    <citation type="journal article" date="2010" name="Cell Host Microbe">
        <title>Receptor-like cytoplasmic kinases integrate signaling from multiple plant immune receptors and are targeted by a Pseudomonas syringae effector.</title>
        <authorList>
            <person name="Zhang J."/>
            <person name="Li W."/>
            <person name="Xiang T."/>
            <person name="Liu Z."/>
            <person name="Laluk K."/>
            <person name="Ding X."/>
            <person name="Zou Y."/>
            <person name="Gao M."/>
            <person name="Zhang X."/>
            <person name="Chen S."/>
            <person name="Mengiste T."/>
            <person name="Zhang Y."/>
            <person name="Zhou J.M."/>
        </authorList>
    </citation>
    <scope>GENE FAMILY</scope>
    <scope>NOMENCLATURE</scope>
</reference>
<keyword id="KW-0025">Alternative splicing</keyword>
<keyword id="KW-0067">ATP-binding</keyword>
<keyword id="KW-1003">Cell membrane</keyword>
<keyword id="KW-0418">Kinase</keyword>
<keyword id="KW-0449">Lipoprotein</keyword>
<keyword id="KW-0472">Membrane</keyword>
<keyword id="KW-0519">Myristate</keyword>
<keyword id="KW-0547">Nucleotide-binding</keyword>
<keyword id="KW-0564">Palmitate</keyword>
<keyword id="KW-0597">Phosphoprotein</keyword>
<keyword id="KW-0611">Plant defense</keyword>
<keyword id="KW-1185">Reference proteome</keyword>
<keyword id="KW-0723">Serine/threonine-protein kinase</keyword>
<keyword id="KW-0808">Transferase</keyword>
<accession>Q9LQQ8</accession>
<name>PBL5_ARATH</name>
<comment type="function">
    <text evidence="1">May be involved in plant defense signaling.</text>
</comment>
<comment type="catalytic activity">
    <reaction evidence="6">
        <text>L-seryl-[protein] + ATP = O-phospho-L-seryl-[protein] + ADP + H(+)</text>
        <dbReference type="Rhea" id="RHEA:17989"/>
        <dbReference type="Rhea" id="RHEA-COMP:9863"/>
        <dbReference type="Rhea" id="RHEA-COMP:11604"/>
        <dbReference type="ChEBI" id="CHEBI:15378"/>
        <dbReference type="ChEBI" id="CHEBI:29999"/>
        <dbReference type="ChEBI" id="CHEBI:30616"/>
        <dbReference type="ChEBI" id="CHEBI:83421"/>
        <dbReference type="ChEBI" id="CHEBI:456216"/>
        <dbReference type="EC" id="2.7.11.1"/>
    </reaction>
</comment>
<comment type="catalytic activity">
    <reaction evidence="6">
        <text>L-threonyl-[protein] + ATP = O-phospho-L-threonyl-[protein] + ADP + H(+)</text>
        <dbReference type="Rhea" id="RHEA:46608"/>
        <dbReference type="Rhea" id="RHEA-COMP:11060"/>
        <dbReference type="Rhea" id="RHEA-COMP:11605"/>
        <dbReference type="ChEBI" id="CHEBI:15378"/>
        <dbReference type="ChEBI" id="CHEBI:30013"/>
        <dbReference type="ChEBI" id="CHEBI:30616"/>
        <dbReference type="ChEBI" id="CHEBI:61977"/>
        <dbReference type="ChEBI" id="CHEBI:456216"/>
        <dbReference type="EC" id="2.7.11.1"/>
    </reaction>
</comment>
<comment type="subcellular location">
    <subcellularLocation>
        <location evidence="1">Cell membrane</location>
        <topology evidence="1">Lipid-anchor</topology>
    </subcellularLocation>
</comment>
<comment type="alternative products">
    <event type="alternative splicing"/>
    <isoform>
        <id>Q9LQQ8-1</id>
        <name>1</name>
        <sequence type="displayed"/>
    </isoform>
    <text>A number of isoforms are produced. According to EST sequences.</text>
</comment>
<comment type="PTM">
    <text evidence="2">Palmitoylation at Cys-3 and Cys-6 are required for plasma membrane location.</text>
</comment>
<comment type="similarity">
    <text evidence="3">Belongs to the protein kinase superfamily. Ser/Thr protein kinase family.</text>
</comment>
<sequence>MGCFGCSKKSSKRSETNKDTVINRKIVGGTTSVAKSDKRDDQTQPSSDSTKVSPYRDVNNEGGVGKEDQLSLDVKGLNLNDQVTGKKAQTFTFQELAEATGNFRSDCFLGEGGFGKVFKGTIEKLDQVVAIKQLDRNGVQGIREFVVEVLTLSLADHPNLVKLIGFCAEGDQRLLVYEYMPQGSLEDHLHVLPSGKKPLDWNTRMKIAAGAARGLEYLHDRMTPPVIYRDLKCSNILLGEDYQPKLSDFGLAKVGPSGDKTHVSTRVMGTYGYCAPDYAMTGQLTFKSDIYSFGVVLLELITGRKAIDNTKTRKDQNLVGWARPLFKDRRNFPKMVDPLLQGQYPVRGLYQALAISAMCVQEQPTMRPVVSDVVLALNFLASSKYDPNSPSSSSGKNPSFHRDRDDEEKRPHLVKETECEGSS</sequence>
<dbReference type="EC" id="2.7.11.1" evidence="6"/>
<dbReference type="EMBL" id="AC007583">
    <property type="protein sequence ID" value="AAF75068.1"/>
    <property type="molecule type" value="Genomic_DNA"/>
</dbReference>
<dbReference type="EMBL" id="CP002684">
    <property type="protein sequence ID" value="AEE28194.1"/>
    <property type="molecule type" value="Genomic_DNA"/>
</dbReference>
<dbReference type="EMBL" id="AY072186">
    <property type="protein sequence ID" value="AAL60008.1"/>
    <property type="molecule type" value="mRNA"/>
</dbReference>
<dbReference type="EMBL" id="AY096744">
    <property type="protein sequence ID" value="AAM20378.1"/>
    <property type="molecule type" value="mRNA"/>
</dbReference>
<dbReference type="PIR" id="B86214">
    <property type="entry name" value="B86214"/>
</dbReference>
<dbReference type="RefSeq" id="NP_172265.1">
    <molecule id="Q9LQQ8-1"/>
    <property type="nucleotide sequence ID" value="NM_100661.5"/>
</dbReference>
<dbReference type="SMR" id="Q9LQQ8"/>
<dbReference type="BioGRID" id="22543">
    <property type="interactions" value="3"/>
</dbReference>
<dbReference type="FunCoup" id="Q9LQQ8">
    <property type="interactions" value="911"/>
</dbReference>
<dbReference type="STRING" id="3702.Q9LQQ8"/>
<dbReference type="iPTMnet" id="Q9LQQ8"/>
<dbReference type="PaxDb" id="3702-AT1G07870.2"/>
<dbReference type="EnsemblPlants" id="AT1G07870.1">
    <molecule id="Q9LQQ8-1"/>
    <property type="protein sequence ID" value="AT1G07870.1"/>
    <property type="gene ID" value="AT1G07870"/>
</dbReference>
<dbReference type="GeneID" id="837302"/>
<dbReference type="Gramene" id="AT1G07870.1">
    <molecule id="Q9LQQ8-1"/>
    <property type="protein sequence ID" value="AT1G07870.1"/>
    <property type="gene ID" value="AT1G07870"/>
</dbReference>
<dbReference type="KEGG" id="ath:AT1G07870"/>
<dbReference type="Araport" id="AT1G07870"/>
<dbReference type="TAIR" id="AT1G07870"/>
<dbReference type="eggNOG" id="KOG1187">
    <property type="taxonomic scope" value="Eukaryota"/>
</dbReference>
<dbReference type="HOGENOM" id="CLU_000288_21_0_1"/>
<dbReference type="InParanoid" id="Q9LQQ8"/>
<dbReference type="OMA" id="QTQSCSD"/>
<dbReference type="PhylomeDB" id="Q9LQQ8"/>
<dbReference type="PRO" id="PR:Q9LQQ8"/>
<dbReference type="Proteomes" id="UP000006548">
    <property type="component" value="Chromosome 1"/>
</dbReference>
<dbReference type="ExpressionAtlas" id="Q9LQQ8">
    <property type="expression patterns" value="baseline and differential"/>
</dbReference>
<dbReference type="GO" id="GO:0005886">
    <property type="term" value="C:plasma membrane"/>
    <property type="evidence" value="ECO:0007669"/>
    <property type="project" value="UniProtKB-SubCell"/>
</dbReference>
<dbReference type="GO" id="GO:0005524">
    <property type="term" value="F:ATP binding"/>
    <property type="evidence" value="ECO:0007669"/>
    <property type="project" value="UniProtKB-KW"/>
</dbReference>
<dbReference type="GO" id="GO:0106310">
    <property type="term" value="F:protein serine kinase activity"/>
    <property type="evidence" value="ECO:0007669"/>
    <property type="project" value="RHEA"/>
</dbReference>
<dbReference type="GO" id="GO:0004674">
    <property type="term" value="F:protein serine/threonine kinase activity"/>
    <property type="evidence" value="ECO:0007669"/>
    <property type="project" value="UniProtKB-KW"/>
</dbReference>
<dbReference type="GO" id="GO:0006952">
    <property type="term" value="P:defense response"/>
    <property type="evidence" value="ECO:0007669"/>
    <property type="project" value="UniProtKB-KW"/>
</dbReference>
<dbReference type="CDD" id="cd14066">
    <property type="entry name" value="STKc_IRAK"/>
    <property type="match status" value="1"/>
</dbReference>
<dbReference type="FunFam" id="3.30.200.20:FF:000266">
    <property type="entry name" value="probable serine/threonine-protein kinase RLCKVII"/>
    <property type="match status" value="1"/>
</dbReference>
<dbReference type="FunFam" id="1.10.510.10:FF:000032">
    <property type="entry name" value="Serine/threonine-protein kinase PBS1"/>
    <property type="match status" value="1"/>
</dbReference>
<dbReference type="Gene3D" id="3.30.200.20">
    <property type="entry name" value="Phosphorylase Kinase, domain 1"/>
    <property type="match status" value="1"/>
</dbReference>
<dbReference type="Gene3D" id="1.10.510.10">
    <property type="entry name" value="Transferase(Phosphotransferase) domain 1"/>
    <property type="match status" value="1"/>
</dbReference>
<dbReference type="InterPro" id="IPR011009">
    <property type="entry name" value="Kinase-like_dom_sf"/>
</dbReference>
<dbReference type="InterPro" id="IPR000719">
    <property type="entry name" value="Prot_kinase_dom"/>
</dbReference>
<dbReference type="InterPro" id="IPR017441">
    <property type="entry name" value="Protein_kinase_ATP_BS"/>
</dbReference>
<dbReference type="InterPro" id="IPR008271">
    <property type="entry name" value="Ser/Thr_kinase_AS"/>
</dbReference>
<dbReference type="PANTHER" id="PTHR47985">
    <property type="entry name" value="OS07G0668900 PROTEIN"/>
    <property type="match status" value="1"/>
</dbReference>
<dbReference type="PANTHER" id="PTHR47985:SF41">
    <property type="entry name" value="SERINE_THREONINE-PROTEIN KINASE PBL5-RELATED"/>
    <property type="match status" value="1"/>
</dbReference>
<dbReference type="Pfam" id="PF00069">
    <property type="entry name" value="Pkinase"/>
    <property type="match status" value="1"/>
</dbReference>
<dbReference type="SMART" id="SM00220">
    <property type="entry name" value="S_TKc"/>
    <property type="match status" value="1"/>
</dbReference>
<dbReference type="SUPFAM" id="SSF56112">
    <property type="entry name" value="Protein kinase-like (PK-like)"/>
    <property type="match status" value="1"/>
</dbReference>
<dbReference type="PROSITE" id="PS00107">
    <property type="entry name" value="PROTEIN_KINASE_ATP"/>
    <property type="match status" value="1"/>
</dbReference>
<dbReference type="PROSITE" id="PS50011">
    <property type="entry name" value="PROTEIN_KINASE_DOM"/>
    <property type="match status" value="1"/>
</dbReference>
<dbReference type="PROSITE" id="PS00108">
    <property type="entry name" value="PROTEIN_KINASE_ST"/>
    <property type="match status" value="1"/>
</dbReference>
<evidence type="ECO:0000250" key="1">
    <source>
        <dbReference type="UniProtKB" id="O48814"/>
    </source>
</evidence>
<evidence type="ECO:0000250" key="2">
    <source>
        <dbReference type="UniProtKB" id="Q9FE20"/>
    </source>
</evidence>
<evidence type="ECO:0000255" key="3">
    <source>
        <dbReference type="PROSITE-ProRule" id="PRU00159"/>
    </source>
</evidence>
<evidence type="ECO:0000256" key="4">
    <source>
        <dbReference type="SAM" id="MobiDB-lite"/>
    </source>
</evidence>
<evidence type="ECO:0000303" key="5">
    <source>
    </source>
</evidence>
<evidence type="ECO:0000305" key="6"/>
<feature type="initiator methionine" description="Removed" evidence="6">
    <location>
        <position position="1"/>
    </location>
</feature>
<feature type="chain" id="PRO_0000086615" description="Probable serine/threonine-protein kinase PBL5">
    <location>
        <begin position="2"/>
        <end position="423"/>
    </location>
</feature>
<feature type="domain" description="Protein kinase" evidence="3">
    <location>
        <begin position="103"/>
        <end position="380"/>
    </location>
</feature>
<feature type="region of interest" description="Disordered" evidence="4">
    <location>
        <begin position="1"/>
        <end position="66"/>
    </location>
</feature>
<feature type="region of interest" description="Disordered" evidence="4">
    <location>
        <begin position="383"/>
        <end position="423"/>
    </location>
</feature>
<feature type="compositionally biased region" description="Basic and acidic residues" evidence="4">
    <location>
        <begin position="12"/>
        <end position="22"/>
    </location>
</feature>
<feature type="compositionally biased region" description="Polar residues" evidence="4">
    <location>
        <begin position="43"/>
        <end position="52"/>
    </location>
</feature>
<feature type="compositionally biased region" description="Low complexity" evidence="4">
    <location>
        <begin position="383"/>
        <end position="398"/>
    </location>
</feature>
<feature type="compositionally biased region" description="Basic and acidic residues" evidence="4">
    <location>
        <begin position="400"/>
        <end position="423"/>
    </location>
</feature>
<feature type="active site" description="Proton acceptor" evidence="3">
    <location>
        <position position="230"/>
    </location>
</feature>
<feature type="binding site" evidence="3">
    <location>
        <begin position="109"/>
        <end position="117"/>
    </location>
    <ligand>
        <name>ATP</name>
        <dbReference type="ChEBI" id="CHEBI:30616"/>
    </ligand>
</feature>
<feature type="binding site" evidence="3">
    <location>
        <position position="132"/>
    </location>
    <ligand>
        <name>ATP</name>
        <dbReference type="ChEBI" id="CHEBI:30616"/>
    </ligand>
</feature>
<feature type="modified residue" description="Phosphothreonine" evidence="1">
    <location>
        <position position="92"/>
    </location>
</feature>
<feature type="modified residue" description="Phosphotyrosine" evidence="1">
    <location>
        <position position="177"/>
    </location>
</feature>
<feature type="modified residue" description="Phosphoserine" evidence="1">
    <location>
        <position position="234"/>
    </location>
</feature>
<feature type="modified residue" description="Phosphoserine" evidence="1">
    <location>
        <position position="264"/>
    </location>
</feature>
<feature type="modified residue" description="Phosphothreonine" evidence="1">
    <location>
        <position position="265"/>
    </location>
</feature>
<feature type="modified residue" description="Phosphothreonine" evidence="1">
    <location>
        <position position="270"/>
    </location>
</feature>
<feature type="modified residue" description="Phosphotyrosine" evidence="1">
    <location>
        <position position="278"/>
    </location>
</feature>
<feature type="lipid moiety-binding region" description="N-myristoyl glycine" evidence="2">
    <location>
        <position position="2"/>
    </location>
</feature>
<feature type="lipid moiety-binding region" description="S-palmitoyl cysteine" evidence="2">
    <location>
        <position position="3"/>
    </location>
</feature>
<organism>
    <name type="scientific">Arabidopsis thaliana</name>
    <name type="common">Mouse-ear cress</name>
    <dbReference type="NCBI Taxonomy" id="3702"/>
    <lineage>
        <taxon>Eukaryota</taxon>
        <taxon>Viridiplantae</taxon>
        <taxon>Streptophyta</taxon>
        <taxon>Embryophyta</taxon>
        <taxon>Tracheophyta</taxon>
        <taxon>Spermatophyta</taxon>
        <taxon>Magnoliopsida</taxon>
        <taxon>eudicotyledons</taxon>
        <taxon>Gunneridae</taxon>
        <taxon>Pentapetalae</taxon>
        <taxon>rosids</taxon>
        <taxon>malvids</taxon>
        <taxon>Brassicales</taxon>
        <taxon>Brassicaceae</taxon>
        <taxon>Camelineae</taxon>
        <taxon>Arabidopsis</taxon>
    </lineage>
</organism>
<protein>
    <recommendedName>
        <fullName evidence="6">Probable serine/threonine-protein kinase PBL5</fullName>
        <ecNumber evidence="6">2.7.11.1</ecNumber>
    </recommendedName>
    <alternativeName>
        <fullName evidence="5">PBS1-like protein 5</fullName>
    </alternativeName>
    <alternativeName>
        <fullName evidence="6">Serine/threonine-protein kinase RLCKVII</fullName>
    </alternativeName>
</protein>
<proteinExistence type="evidence at transcript level"/>